<accession>G3X745</accession>
<accession>Q2KJ65</accession>
<comment type="function">
    <text evidence="1">Cell surface proteoglycan that bears heparan sulfate. Binds, via the heparan sulfate side chains, alpha-4 (V) collagen and participates in Schwann cell myelination (By similarity). May act as a catalyst in increasing the rate of conversion of prion protein PRPN (C) to PRNP (Sc) via associating (via the heparan sulfate side chains) with both forms of PRPN, targeting them to lipid rafts and facilitating their interaction. Required for proper skeletal muscle differentiation by sequestering FGF2 in lipid rafts preventing its binding to receptors (FGFRs) and inhibiting the FGF-mediated signaling (By similarity).</text>
</comment>
<comment type="subcellular location">
    <subcellularLocation>
        <location evidence="1">Cell membrane</location>
        <topology evidence="1">Lipid-anchor</topology>
        <topology evidence="1">GPI-anchor</topology>
        <orientation evidence="1">Extracellular side</orientation>
    </subcellularLocation>
    <subcellularLocation>
        <location evidence="1">Endosome</location>
    </subcellularLocation>
    <text evidence="1">S-nitrosylated form recycled in endosomes. Localizes to CAV1-containing vesicles close to the cell surface. Cleavage of heparan sulfate side chains takes place mainly in late endosomes. Associates with both forms of PRNP in lipid rafts. Colocalizes with APP in perinuclear compartments and with CP in intracellular compartments (By similarity).</text>
</comment>
<comment type="subcellular location">
    <molecule>Secreted glypican-1</molecule>
    <subcellularLocation>
        <location evidence="1">Secreted</location>
        <location evidence="1">Extracellular space</location>
    </subcellularLocation>
</comment>
<comment type="PTM">
    <text evidence="1">S-nitrosylated in a Cu(2+)-dependent manner. Nitric acid (NO) is released from the nitrosylated cysteines by ascorbate or by some other reducing agent, in a Cu(2+) or Zn(2+) dependent manner. This free nitric oxide is then capable of cleaving the heparan sulfate side chains (By similarity).</text>
</comment>
<comment type="PTM">
    <text evidence="1">N- and O-glycosylated (By similarity). N-glycosylation is mainly of the complex type containing sialic acid. O-glycosylated with heparan sulfate. The heparan sulfate chains can be cleaved either by the action of heparanase or, degraded by a deaminative process that uses nitric oxide (NO) released from the S-nitrosylated cysteines. This process is triggered by ascorbate, or by some other reducing agent, in a Cu(2+)- or Zn(2+) dependent manner. Cu(2+) ions are provided by ceruloproteins such as APP, PRNP or CP which associate with GCP1 in intracellular compartments or lipid rafts (By similarity).</text>
</comment>
<comment type="PTM">
    <text evidence="1">Shed from the cell surface probably by further cleavage.</text>
</comment>
<comment type="similarity">
    <text evidence="4">Belongs to the glypican family.</text>
</comment>
<sequence>MELRARGWWLLYAAAVLVACARGDPASKSRSCGEVRQIYGAKGFSLSDVPQAEISGEHLRICPQGYTCCTSEMEENLANRSRAELETALLEGTRALQATLAAQQRGFDDHFQRLLNDSERALQEAFPGAFGELYTQNAKAFRDLYAELRLYYGGANLHLQETLAEFWARLLERLFRQLHPQLLLPDDYLDCLGKQAEPLRPFGEAPRELRLRATRAFVAARTFVQGLGVAGDVVRKVAKVPLSPECSRAVMKLVYCAHCLGVPGARPCPDYCRNVLKGCLANQADLDAEWRNLLDSMVLITDKFWGPSGAESVVGGVHYWLAEAINALQDNSDTLTAKVIQGCGNPKVNPQGPGTEEKWPRGKLALQERPPAGTLQKLVSEAKAQLRDAQDFWISLPGTLCSEKLAMSSASDERCWNGMAKGRYLPEVMGDGLANQINNPEVEVDITKPDMTIRQQIMQLKIMTNRLRGAYNGNDLDFQDASDDGSGSGSGEGCPDEMCGRKVGRKSASSRTPLTHALPGLSEREGQQTSAAAPTPPQASPLLLLGLALALPAVAPRGR</sequence>
<feature type="signal peptide" evidence="2">
    <location>
        <begin position="1"/>
        <end position="23"/>
    </location>
</feature>
<feature type="chain" id="PRO_0000417504" description="Glypican-1">
    <location>
        <begin position="24"/>
        <end position="530"/>
    </location>
</feature>
<feature type="chain" id="PRO_0000417505" description="Secreted glypican-1">
    <location>
        <begin position="24"/>
        <end status="unknown"/>
    </location>
</feature>
<feature type="propeptide" id="PRO_0000417506" description="Removed in mature form" evidence="1">
    <location>
        <begin position="531"/>
        <end position="559"/>
    </location>
</feature>
<feature type="region of interest" description="Disordered" evidence="3">
    <location>
        <begin position="478"/>
        <end position="539"/>
    </location>
</feature>
<feature type="lipid moiety-binding region" description="GPI-anchor amidated serine" evidence="1">
    <location>
        <position position="530"/>
    </location>
</feature>
<feature type="glycosylation site" description="N-linked (GlcNAc...) asparagine" evidence="2">
    <location>
        <position position="79"/>
    </location>
</feature>
<feature type="glycosylation site" description="N-linked (GlcNAc...) asparagine" evidence="2">
    <location>
        <position position="116"/>
    </location>
</feature>
<feature type="glycosylation site" description="O-linked (Xyl...) (heparan sulfate) serine" evidence="2">
    <location>
        <position position="486"/>
    </location>
</feature>
<feature type="glycosylation site" description="O-linked (Xyl...) (heparan sulfate) serine" evidence="2">
    <location>
        <position position="488"/>
    </location>
</feature>
<feature type="glycosylation site" description="O-linked (Xyl...) (heparan sulfate) serine" evidence="2">
    <location>
        <position position="490"/>
    </location>
</feature>
<feature type="disulfide bond" evidence="1">
    <location>
        <begin position="32"/>
        <end position="68"/>
    </location>
</feature>
<feature type="disulfide bond" evidence="1">
    <location>
        <begin position="62"/>
        <end position="256"/>
    </location>
</feature>
<feature type="disulfide bond" evidence="1">
    <location>
        <begin position="69"/>
        <end position="259"/>
    </location>
</feature>
<feature type="disulfide bond" evidence="1">
    <location>
        <begin position="191"/>
        <end position="343"/>
    </location>
</feature>
<feature type="disulfide bond" evidence="1">
    <location>
        <begin position="246"/>
        <end position="279"/>
    </location>
</feature>
<feature type="disulfide bond" evidence="1">
    <location>
        <begin position="268"/>
        <end position="415"/>
    </location>
</feature>
<feature type="disulfide bond" evidence="1">
    <location>
        <begin position="272"/>
        <end position="401"/>
    </location>
</feature>
<feature type="sequence conflict" description="In Ref. 2; AAI53220/AAI05497." evidence="4" ref="2">
    <original>V</original>
    <variation>A</variation>
    <location>
        <position position="554"/>
    </location>
</feature>
<name>GPC1_BOVIN</name>
<protein>
    <recommendedName>
        <fullName>Glypican-1</fullName>
    </recommendedName>
    <component>
        <recommendedName>
            <fullName>Secreted glypican-1</fullName>
        </recommendedName>
    </component>
</protein>
<evidence type="ECO:0000250" key="1"/>
<evidence type="ECO:0000255" key="2"/>
<evidence type="ECO:0000256" key="3">
    <source>
        <dbReference type="SAM" id="MobiDB-lite"/>
    </source>
</evidence>
<evidence type="ECO:0000305" key="4"/>
<organism>
    <name type="scientific">Bos taurus</name>
    <name type="common">Bovine</name>
    <dbReference type="NCBI Taxonomy" id="9913"/>
    <lineage>
        <taxon>Eukaryota</taxon>
        <taxon>Metazoa</taxon>
        <taxon>Chordata</taxon>
        <taxon>Craniata</taxon>
        <taxon>Vertebrata</taxon>
        <taxon>Euteleostomi</taxon>
        <taxon>Mammalia</taxon>
        <taxon>Eutheria</taxon>
        <taxon>Laurasiatheria</taxon>
        <taxon>Artiodactyla</taxon>
        <taxon>Ruminantia</taxon>
        <taxon>Pecora</taxon>
        <taxon>Bovidae</taxon>
        <taxon>Bovinae</taxon>
        <taxon>Bos</taxon>
    </lineage>
</organism>
<dbReference type="EMBL" id="DAAA02009500">
    <property type="status" value="NOT_ANNOTATED_CDS"/>
    <property type="molecule type" value="Genomic_DNA"/>
</dbReference>
<dbReference type="EMBL" id="DAAA02009501">
    <property type="status" value="NOT_ANNOTATED_CDS"/>
    <property type="molecule type" value="Genomic_DNA"/>
</dbReference>
<dbReference type="EMBL" id="DAAA02009502">
    <property type="status" value="NOT_ANNOTATED_CDS"/>
    <property type="molecule type" value="Genomic_DNA"/>
</dbReference>
<dbReference type="EMBL" id="DAAA02009503">
    <property type="status" value="NOT_ANNOTATED_CDS"/>
    <property type="molecule type" value="Genomic_DNA"/>
</dbReference>
<dbReference type="EMBL" id="DAAA02009504">
    <property type="status" value="NOT_ANNOTATED_CDS"/>
    <property type="molecule type" value="Genomic_DNA"/>
</dbReference>
<dbReference type="EMBL" id="DAAA02009505">
    <property type="status" value="NOT_ANNOTATED_CDS"/>
    <property type="molecule type" value="Genomic_DNA"/>
</dbReference>
<dbReference type="EMBL" id="DAAA02009506">
    <property type="status" value="NOT_ANNOTATED_CDS"/>
    <property type="molecule type" value="Genomic_DNA"/>
</dbReference>
<dbReference type="EMBL" id="BC105496">
    <property type="protein sequence ID" value="AAI05497.1"/>
    <property type="molecule type" value="mRNA"/>
</dbReference>
<dbReference type="EMBL" id="BC153219">
    <property type="protein sequence ID" value="AAI53220.1"/>
    <property type="molecule type" value="mRNA"/>
</dbReference>
<dbReference type="RefSeq" id="XP_010802238.1">
    <property type="nucleotide sequence ID" value="XM_010803936.1"/>
</dbReference>
<dbReference type="RefSeq" id="XP_015318389.1">
    <property type="nucleotide sequence ID" value="XM_015462903.1"/>
</dbReference>
<dbReference type="SMR" id="G3X745"/>
<dbReference type="FunCoup" id="G3X745">
    <property type="interactions" value="845"/>
</dbReference>
<dbReference type="STRING" id="9913.ENSBTAP00000060932"/>
<dbReference type="GlyCosmos" id="G3X745">
    <property type="glycosylation" value="5 sites, No reported glycans"/>
</dbReference>
<dbReference type="GlyGen" id="G3X745">
    <property type="glycosylation" value="5 sites"/>
</dbReference>
<dbReference type="PaxDb" id="9913-ENSBTAP00000018329"/>
<dbReference type="GeneID" id="518114"/>
<dbReference type="KEGG" id="bta:518114"/>
<dbReference type="CTD" id="2817"/>
<dbReference type="eggNOG" id="KOG3821">
    <property type="taxonomic scope" value="Eukaryota"/>
</dbReference>
<dbReference type="HOGENOM" id="CLU_024658_2_0_1"/>
<dbReference type="InParanoid" id="G3X745"/>
<dbReference type="OrthoDB" id="10010764at2759"/>
<dbReference type="TreeFam" id="TF105317"/>
<dbReference type="Proteomes" id="UP000009136">
    <property type="component" value="Unplaced"/>
</dbReference>
<dbReference type="GO" id="GO:0009986">
    <property type="term" value="C:cell surface"/>
    <property type="evidence" value="ECO:0000318"/>
    <property type="project" value="GO_Central"/>
</dbReference>
<dbReference type="GO" id="GO:0005768">
    <property type="term" value="C:endosome"/>
    <property type="evidence" value="ECO:0007669"/>
    <property type="project" value="UniProtKB-SubCell"/>
</dbReference>
<dbReference type="GO" id="GO:0031012">
    <property type="term" value="C:extracellular matrix"/>
    <property type="evidence" value="ECO:0000250"/>
    <property type="project" value="UniProtKB"/>
</dbReference>
<dbReference type="GO" id="GO:0005576">
    <property type="term" value="C:extracellular region"/>
    <property type="evidence" value="ECO:0007669"/>
    <property type="project" value="UniProtKB-SubCell"/>
</dbReference>
<dbReference type="GO" id="GO:0045121">
    <property type="term" value="C:membrane raft"/>
    <property type="evidence" value="ECO:0000250"/>
    <property type="project" value="UniProtKB"/>
</dbReference>
<dbReference type="GO" id="GO:0005886">
    <property type="term" value="C:plasma membrane"/>
    <property type="evidence" value="ECO:0007669"/>
    <property type="project" value="UniProtKB-SubCell"/>
</dbReference>
<dbReference type="GO" id="GO:0098552">
    <property type="term" value="C:side of membrane"/>
    <property type="evidence" value="ECO:0007669"/>
    <property type="project" value="UniProtKB-KW"/>
</dbReference>
<dbReference type="GO" id="GO:0045202">
    <property type="term" value="C:synapse"/>
    <property type="evidence" value="ECO:0000318"/>
    <property type="project" value="GO_Central"/>
</dbReference>
<dbReference type="GO" id="GO:0005507">
    <property type="term" value="F:copper ion binding"/>
    <property type="evidence" value="ECO:0000250"/>
    <property type="project" value="UniProtKB"/>
</dbReference>
<dbReference type="GO" id="GO:0017134">
    <property type="term" value="F:fibroblast growth factor binding"/>
    <property type="evidence" value="ECO:0000250"/>
    <property type="project" value="UniProtKB"/>
</dbReference>
<dbReference type="GO" id="GO:0043236">
    <property type="term" value="F:laminin binding"/>
    <property type="evidence" value="ECO:0000250"/>
    <property type="project" value="UniProtKB"/>
</dbReference>
<dbReference type="GO" id="GO:0016477">
    <property type="term" value="P:cell migration"/>
    <property type="evidence" value="ECO:0000318"/>
    <property type="project" value="GO_Central"/>
</dbReference>
<dbReference type="GO" id="GO:0030200">
    <property type="term" value="P:heparan sulfate proteoglycan catabolic process"/>
    <property type="evidence" value="ECO:0000250"/>
    <property type="project" value="UniProtKB"/>
</dbReference>
<dbReference type="GO" id="GO:0040037">
    <property type="term" value="P:negative regulation of fibroblast growth factor receptor signaling pathway"/>
    <property type="evidence" value="ECO:0000250"/>
    <property type="project" value="UniProtKB"/>
</dbReference>
<dbReference type="GO" id="GO:2001016">
    <property type="term" value="P:positive regulation of skeletal muscle cell differentiation"/>
    <property type="evidence" value="ECO:0000250"/>
    <property type="project" value="UniProtKB"/>
</dbReference>
<dbReference type="GO" id="GO:1905475">
    <property type="term" value="P:regulation of protein localization to membrane"/>
    <property type="evidence" value="ECO:0000318"/>
    <property type="project" value="GO_Central"/>
</dbReference>
<dbReference type="InterPro" id="IPR001863">
    <property type="entry name" value="Glypican"/>
</dbReference>
<dbReference type="InterPro" id="IPR019803">
    <property type="entry name" value="Glypican_CS"/>
</dbReference>
<dbReference type="PANTHER" id="PTHR10822">
    <property type="entry name" value="GLYPICAN"/>
    <property type="match status" value="1"/>
</dbReference>
<dbReference type="PANTHER" id="PTHR10822:SF8">
    <property type="entry name" value="GLYPICAN-1"/>
    <property type="match status" value="1"/>
</dbReference>
<dbReference type="Pfam" id="PF01153">
    <property type="entry name" value="Glypican"/>
    <property type="match status" value="1"/>
</dbReference>
<dbReference type="PROSITE" id="PS01207">
    <property type="entry name" value="GLYPICAN"/>
    <property type="match status" value="1"/>
</dbReference>
<keyword id="KW-1003">Cell membrane</keyword>
<keyword id="KW-0186">Copper</keyword>
<keyword id="KW-1015">Disulfide bond</keyword>
<keyword id="KW-0967">Endosome</keyword>
<keyword id="KW-0325">Glycoprotein</keyword>
<keyword id="KW-0336">GPI-anchor</keyword>
<keyword id="KW-0357">Heparan sulfate</keyword>
<keyword id="KW-0449">Lipoprotein</keyword>
<keyword id="KW-0472">Membrane</keyword>
<keyword id="KW-0654">Proteoglycan</keyword>
<keyword id="KW-1185">Reference proteome</keyword>
<keyword id="KW-0964">Secreted</keyword>
<keyword id="KW-0732">Signal</keyword>
<keyword id="KW-0862">Zinc</keyword>
<reference key="1">
    <citation type="journal article" date="2009" name="Genome Biol.">
        <title>A whole-genome assembly of the domestic cow, Bos taurus.</title>
        <authorList>
            <person name="Zimin A.V."/>
            <person name="Delcher A.L."/>
            <person name="Florea L."/>
            <person name="Kelley D.R."/>
            <person name="Schatz M.C."/>
            <person name="Puiu D."/>
            <person name="Hanrahan F."/>
            <person name="Pertea G."/>
            <person name="Van Tassell C.P."/>
            <person name="Sonstegard T.S."/>
            <person name="Marcais G."/>
            <person name="Roberts M."/>
            <person name="Subramanian P."/>
            <person name="Yorke J.A."/>
            <person name="Salzberg S.L."/>
        </authorList>
    </citation>
    <scope>NUCLEOTIDE SEQUENCE [LARGE SCALE GENOMIC DNA]</scope>
    <source>
        <strain>Hereford</strain>
    </source>
</reference>
<reference key="2">
    <citation type="submission" date="2007-09" db="EMBL/GenBank/DDBJ databases">
        <authorList>
            <consortium name="NIH - Mammalian Gene Collection (MGC) project"/>
        </authorList>
    </citation>
    <scope>NUCLEOTIDE SEQUENCE [LARGE SCALE MRNA]</scope>
    <source>
        <strain>Hereford</strain>
        <tissue>Hypothalamus</tissue>
    </source>
</reference>
<proteinExistence type="evidence at transcript level"/>
<gene>
    <name type="primary">GPC1</name>
</gene>